<keyword id="KW-0067">ATP-binding</keyword>
<keyword id="KW-0997">Cell inner membrane</keyword>
<keyword id="KW-1003">Cell membrane</keyword>
<keyword id="KW-0270">Exopolysaccharide synthesis</keyword>
<keyword id="KW-0418">Kinase</keyword>
<keyword id="KW-0472">Membrane</keyword>
<keyword id="KW-0547">Nucleotide-binding</keyword>
<keyword id="KW-0597">Phosphoprotein</keyword>
<keyword id="KW-0808">Transferase</keyword>
<keyword id="KW-0812">Transmembrane</keyword>
<keyword id="KW-1133">Transmembrane helix</keyword>
<keyword id="KW-0829">Tyrosine-protein kinase</keyword>
<evidence type="ECO:0000250" key="1"/>
<evidence type="ECO:0000255" key="2"/>
<evidence type="ECO:0000269" key="3">
    <source>
    </source>
</evidence>
<evidence type="ECO:0000305" key="4"/>
<accession>Q48452</accession>
<dbReference type="EC" id="2.7.10.-"/>
<dbReference type="EMBL" id="D21242">
    <property type="protein sequence ID" value="BAA04777.1"/>
    <property type="molecule type" value="Genomic_DNA"/>
</dbReference>
<dbReference type="RefSeq" id="WP_130952150.1">
    <property type="nucleotide sequence ID" value="NZ_BIJR01000001.1"/>
</dbReference>
<dbReference type="SMR" id="Q48452"/>
<dbReference type="UniPathway" id="UPA00631"/>
<dbReference type="GO" id="GO:0005886">
    <property type="term" value="C:plasma membrane"/>
    <property type="evidence" value="ECO:0007669"/>
    <property type="project" value="UniProtKB-SubCell"/>
</dbReference>
<dbReference type="GO" id="GO:0005524">
    <property type="term" value="F:ATP binding"/>
    <property type="evidence" value="ECO:0007669"/>
    <property type="project" value="UniProtKB-KW"/>
</dbReference>
<dbReference type="GO" id="GO:0004713">
    <property type="term" value="F:protein tyrosine kinase activity"/>
    <property type="evidence" value="ECO:0007669"/>
    <property type="project" value="UniProtKB-KW"/>
</dbReference>
<dbReference type="GO" id="GO:0000271">
    <property type="term" value="P:polysaccharide biosynthetic process"/>
    <property type="evidence" value="ECO:0007669"/>
    <property type="project" value="UniProtKB-KW"/>
</dbReference>
<dbReference type="CDD" id="cd05387">
    <property type="entry name" value="BY-kinase"/>
    <property type="match status" value="1"/>
</dbReference>
<dbReference type="FunFam" id="3.40.50.300:FF:000527">
    <property type="entry name" value="Tyrosine-protein kinase etk"/>
    <property type="match status" value="1"/>
</dbReference>
<dbReference type="Gene3D" id="3.40.50.300">
    <property type="entry name" value="P-loop containing nucleotide triphosphate hydrolases"/>
    <property type="match status" value="1"/>
</dbReference>
<dbReference type="InterPro" id="IPR025669">
    <property type="entry name" value="AAA_dom"/>
</dbReference>
<dbReference type="InterPro" id="IPR050445">
    <property type="entry name" value="Bact_polysacc_biosynth/exp"/>
</dbReference>
<dbReference type="InterPro" id="IPR032807">
    <property type="entry name" value="GNVR"/>
</dbReference>
<dbReference type="InterPro" id="IPR003856">
    <property type="entry name" value="LPS_length_determ_N_term"/>
</dbReference>
<dbReference type="InterPro" id="IPR027417">
    <property type="entry name" value="P-loop_NTPase"/>
</dbReference>
<dbReference type="InterPro" id="IPR005702">
    <property type="entry name" value="Wzc-like_C"/>
</dbReference>
<dbReference type="NCBIfam" id="TIGR01007">
    <property type="entry name" value="eps_fam"/>
    <property type="match status" value="1"/>
</dbReference>
<dbReference type="PANTHER" id="PTHR32309">
    <property type="entry name" value="TYROSINE-PROTEIN KINASE"/>
    <property type="match status" value="1"/>
</dbReference>
<dbReference type="PANTHER" id="PTHR32309:SF32">
    <property type="entry name" value="TYROSINE-PROTEIN KINASE ETK-RELATED"/>
    <property type="match status" value="1"/>
</dbReference>
<dbReference type="Pfam" id="PF13614">
    <property type="entry name" value="AAA_31"/>
    <property type="match status" value="1"/>
</dbReference>
<dbReference type="Pfam" id="PF13807">
    <property type="entry name" value="GNVR"/>
    <property type="match status" value="1"/>
</dbReference>
<dbReference type="Pfam" id="PF23607">
    <property type="entry name" value="WZC_N"/>
    <property type="match status" value="1"/>
</dbReference>
<dbReference type="Pfam" id="PF02706">
    <property type="entry name" value="Wzz"/>
    <property type="match status" value="1"/>
</dbReference>
<dbReference type="SUPFAM" id="SSF52540">
    <property type="entry name" value="P-loop containing nucleoside triphosphate hydrolases"/>
    <property type="match status" value="1"/>
</dbReference>
<organism>
    <name type="scientific">Klebsiella pneumoniae</name>
    <dbReference type="NCBI Taxonomy" id="573"/>
    <lineage>
        <taxon>Bacteria</taxon>
        <taxon>Pseudomonadati</taxon>
        <taxon>Pseudomonadota</taxon>
        <taxon>Gammaproteobacteria</taxon>
        <taxon>Enterobacterales</taxon>
        <taxon>Enterobacteriaceae</taxon>
        <taxon>Klebsiella/Raoultella group</taxon>
        <taxon>Klebsiella</taxon>
        <taxon>Klebsiella pneumoniae complex</taxon>
    </lineage>
</organism>
<reference key="1">
    <citation type="journal article" date="1995" name="J. Bacteriol.">
        <title>Genomic organization of the Klebsiella pneumoniae cps region responsible for serotype K2 capsular polysaccharide synthesis in the virulent strain Chedid.</title>
        <authorList>
            <person name="Arakawa Y."/>
            <person name="Wacharotayankun R."/>
            <person name="Nagatsuka T."/>
            <person name="Ito H."/>
            <person name="Kato N."/>
            <person name="Ohta M."/>
        </authorList>
    </citation>
    <scope>NUCLEOTIDE SEQUENCE [GENOMIC DNA]</scope>
    <source>
        <strain>Chedid</strain>
    </source>
</reference>
<reference key="2">
    <citation type="journal article" date="2002" name="Comp. Biochem. Physiol.">
        <title>Isolation and characterization of a protein-tyrosine kinase and a phosphotyrosine-protein phosphatase from Klebsiella pneumoniae.</title>
        <authorList>
            <person name="Preneta R."/>
            <person name="Jarraud S."/>
            <person name="Vincent C."/>
            <person name="Doublet P."/>
            <person name="Duclos B."/>
            <person name="Etienne J."/>
            <person name="Cozzone A.J."/>
        </authorList>
    </citation>
    <scope>PHOSPHORYLATION</scope>
</reference>
<name>YC06_KLEPN</name>
<comment type="catalytic activity">
    <reaction>
        <text>L-tyrosyl-[protein] + ATP = O-phospho-L-tyrosyl-[protein] + ADP + H(+)</text>
        <dbReference type="Rhea" id="RHEA:10596"/>
        <dbReference type="Rhea" id="RHEA-COMP:10136"/>
        <dbReference type="Rhea" id="RHEA-COMP:20101"/>
        <dbReference type="ChEBI" id="CHEBI:15378"/>
        <dbReference type="ChEBI" id="CHEBI:30616"/>
        <dbReference type="ChEBI" id="CHEBI:46858"/>
        <dbReference type="ChEBI" id="CHEBI:61978"/>
        <dbReference type="ChEBI" id="CHEBI:456216"/>
    </reaction>
</comment>
<comment type="pathway">
    <text>Glycan metabolism; exopolysaccharide biosynthesis.</text>
</comment>
<comment type="subcellular location">
    <subcellularLocation>
        <location evidence="1">Cell inner membrane</location>
        <topology evidence="1">Multi-pass membrane protein</topology>
    </subcellularLocation>
</comment>
<comment type="PTM">
    <text evidence="3">Autophosphorylated on tyrosine residue(s).</text>
</comment>
<comment type="similarity">
    <text evidence="4">Belongs to the etk/wzc family.</text>
</comment>
<proteinExistence type="evidence at protein level"/>
<feature type="chain" id="PRO_0000212360" description="Putative tyrosine-protein kinase in cps region">
    <location>
        <begin position="1"/>
        <end position="722"/>
    </location>
</feature>
<feature type="transmembrane region" description="Helical" evidence="2">
    <location>
        <begin position="31"/>
        <end position="53"/>
    </location>
</feature>
<feature type="transmembrane region" description="Helical" evidence="2">
    <location>
        <begin position="427"/>
        <end position="449"/>
    </location>
</feature>
<sequence length="722" mass="80400">MTSISKKKQPETVDDLDFGRMVGELIDHRKIIIALTSFATLIALLYAFFATPIYKADALIQVEQKQANAILSNLSQMLPDSQPQSAPEIALIQSRMILGKTVDDLNLQAVVSPKYFPIFGRGWARLSGEHQGNIQLSRLYVSSSIGDEENPPEFTLKVKDSNRYVIEFGGEEINGKVGELIEKDGITLKIDEINAKPGAEFTIKYVSKLKAIADLQENLSVADQGKDTGILILSYLGDDPLKIKNIVDSISENYLAQNISRQAAQDEKSLEFLNKQLPMVRSDLDSAEDKLNDFRKRNDSVDLSLEAKSVLDQIVNVDNQLNELTFRESEISQLYTKEHPTYKALMEKRKTLQDERGKLNKRVATMPETQQEILRLSRDVESGRAVYMQLLNRQQELNIAKSSAIGNVRIIDSAVTQHKPVKPKKIIVVLAGLFIGLVISVSLVLVRILLRKGIETPEQLEELGINVYASIPVSESNPKNVIAKRLNKRDDSRPKVLLATENPADLAIEAIRGLRTSLHFAMLEARNNLLMISGASPNAGKTFVSSNLSSVISQTGKKVIFIDADLRKGYTHKLFNIKNTNGLSDYLSGRVALDKIINNLQTEGFDYISRGSVPPNPAELLMHNRLAELLEWANKSYDIVILDTPPILAVADAAIIGNYVGTTLLVARFEENTPKEIDISVKRFQNSGVNIKGCILNGVVKKATNKYGYGYNYYDYSYSDKK</sequence>
<protein>
    <recommendedName>
        <fullName>Putative tyrosine-protein kinase in cps region</fullName>
        <ecNumber>2.7.10.-</ecNumber>
    </recommendedName>
    <alternativeName>
        <fullName>ORF6</fullName>
    </alternativeName>
</protein>